<dbReference type="EC" id="2.4.2.9" evidence="1"/>
<dbReference type="EMBL" id="AP011115">
    <property type="protein sequence ID" value="BAH48634.1"/>
    <property type="molecule type" value="Genomic_DNA"/>
</dbReference>
<dbReference type="RefSeq" id="WP_012687641.1">
    <property type="nucleotide sequence ID" value="NC_012522.1"/>
</dbReference>
<dbReference type="SMR" id="C1ARF7"/>
<dbReference type="STRING" id="632772.ROP_03870"/>
<dbReference type="KEGG" id="rop:ROP_03870"/>
<dbReference type="PATRIC" id="fig|632772.20.peg.433"/>
<dbReference type="HOGENOM" id="CLU_067096_2_2_11"/>
<dbReference type="OrthoDB" id="9781675at2"/>
<dbReference type="UniPathway" id="UPA00574">
    <property type="reaction ID" value="UER00636"/>
</dbReference>
<dbReference type="Proteomes" id="UP000002212">
    <property type="component" value="Chromosome"/>
</dbReference>
<dbReference type="GO" id="GO:0005525">
    <property type="term" value="F:GTP binding"/>
    <property type="evidence" value="ECO:0007669"/>
    <property type="project" value="UniProtKB-KW"/>
</dbReference>
<dbReference type="GO" id="GO:0000287">
    <property type="term" value="F:magnesium ion binding"/>
    <property type="evidence" value="ECO:0007669"/>
    <property type="project" value="UniProtKB-UniRule"/>
</dbReference>
<dbReference type="GO" id="GO:0004845">
    <property type="term" value="F:uracil phosphoribosyltransferase activity"/>
    <property type="evidence" value="ECO:0007669"/>
    <property type="project" value="UniProtKB-UniRule"/>
</dbReference>
<dbReference type="GO" id="GO:0044206">
    <property type="term" value="P:UMP salvage"/>
    <property type="evidence" value="ECO:0007669"/>
    <property type="project" value="UniProtKB-UniRule"/>
</dbReference>
<dbReference type="GO" id="GO:0006223">
    <property type="term" value="P:uracil salvage"/>
    <property type="evidence" value="ECO:0007669"/>
    <property type="project" value="InterPro"/>
</dbReference>
<dbReference type="CDD" id="cd06223">
    <property type="entry name" value="PRTases_typeI"/>
    <property type="match status" value="1"/>
</dbReference>
<dbReference type="FunFam" id="3.40.50.2020:FF:000003">
    <property type="entry name" value="Uracil phosphoribosyltransferase"/>
    <property type="match status" value="1"/>
</dbReference>
<dbReference type="Gene3D" id="3.40.50.2020">
    <property type="match status" value="1"/>
</dbReference>
<dbReference type="HAMAP" id="MF_01218_B">
    <property type="entry name" value="Upp_B"/>
    <property type="match status" value="1"/>
</dbReference>
<dbReference type="InterPro" id="IPR000836">
    <property type="entry name" value="PRibTrfase_dom"/>
</dbReference>
<dbReference type="InterPro" id="IPR029057">
    <property type="entry name" value="PRTase-like"/>
</dbReference>
<dbReference type="InterPro" id="IPR034332">
    <property type="entry name" value="Upp_B"/>
</dbReference>
<dbReference type="InterPro" id="IPR050054">
    <property type="entry name" value="UPRTase/APRTase"/>
</dbReference>
<dbReference type="InterPro" id="IPR005765">
    <property type="entry name" value="Ura_phspho_trans"/>
</dbReference>
<dbReference type="NCBIfam" id="NF001097">
    <property type="entry name" value="PRK00129.1"/>
    <property type="match status" value="1"/>
</dbReference>
<dbReference type="NCBIfam" id="TIGR01091">
    <property type="entry name" value="upp"/>
    <property type="match status" value="1"/>
</dbReference>
<dbReference type="PANTHER" id="PTHR32315">
    <property type="entry name" value="ADENINE PHOSPHORIBOSYLTRANSFERASE"/>
    <property type="match status" value="1"/>
</dbReference>
<dbReference type="PANTHER" id="PTHR32315:SF4">
    <property type="entry name" value="URACIL PHOSPHORIBOSYLTRANSFERASE, CHLOROPLASTIC"/>
    <property type="match status" value="1"/>
</dbReference>
<dbReference type="Pfam" id="PF14681">
    <property type="entry name" value="UPRTase"/>
    <property type="match status" value="1"/>
</dbReference>
<dbReference type="SUPFAM" id="SSF53271">
    <property type="entry name" value="PRTase-like"/>
    <property type="match status" value="1"/>
</dbReference>
<protein>
    <recommendedName>
        <fullName evidence="1">Uracil phosphoribosyltransferase</fullName>
        <ecNumber evidence="1">2.4.2.9</ecNumber>
    </recommendedName>
    <alternativeName>
        <fullName evidence="1">UMP pyrophosphorylase</fullName>
    </alternativeName>
    <alternativeName>
        <fullName evidence="1">UPRTase</fullName>
    </alternativeName>
</protein>
<evidence type="ECO:0000255" key="1">
    <source>
        <dbReference type="HAMAP-Rule" id="MF_01218"/>
    </source>
</evidence>
<gene>
    <name evidence="1" type="primary">upp</name>
    <name type="ordered locus">ROP_03870</name>
</gene>
<sequence>MGTVHLIDHPLVQHKLTMMRRKDASTNSFRRLANEISALMTYEVLRDIPMQEIEIETPLEVTTGRVIDGKKLVFVSILRAGTGILDGMLTIVPGARVGHIGLYRDPRTLVAVEYYFKMPGDLHERDVVVVDPLLATGNSAVAAVERLKECGPKSIKFVCLLTCPEGVAALDKAHPDVPIYTAAVDRQLDEHGYILPGIGDAGDRIFGTK</sequence>
<accession>C1ARF7</accession>
<name>UPP_RHOOB</name>
<reference key="1">
    <citation type="submission" date="2009-03" db="EMBL/GenBank/DDBJ databases">
        <title>Comparison of the complete genome sequences of Rhodococcus erythropolis PR4 and Rhodococcus opacus B4.</title>
        <authorList>
            <person name="Takarada H."/>
            <person name="Sekine M."/>
            <person name="Hosoyama A."/>
            <person name="Yamada R."/>
            <person name="Fujisawa T."/>
            <person name="Omata S."/>
            <person name="Shimizu A."/>
            <person name="Tsukatani N."/>
            <person name="Tanikawa S."/>
            <person name="Fujita N."/>
            <person name="Harayama S."/>
        </authorList>
    </citation>
    <scope>NUCLEOTIDE SEQUENCE [LARGE SCALE GENOMIC DNA]</scope>
    <source>
        <strain>B4</strain>
    </source>
</reference>
<organism>
    <name type="scientific">Rhodococcus opacus (strain B4)</name>
    <dbReference type="NCBI Taxonomy" id="632772"/>
    <lineage>
        <taxon>Bacteria</taxon>
        <taxon>Bacillati</taxon>
        <taxon>Actinomycetota</taxon>
        <taxon>Actinomycetes</taxon>
        <taxon>Mycobacteriales</taxon>
        <taxon>Nocardiaceae</taxon>
        <taxon>Rhodococcus</taxon>
    </lineage>
</organism>
<comment type="function">
    <text evidence="1">Catalyzes the conversion of uracil and 5-phospho-alpha-D-ribose 1-diphosphate (PRPP) to UMP and diphosphate.</text>
</comment>
<comment type="catalytic activity">
    <reaction evidence="1">
        <text>UMP + diphosphate = 5-phospho-alpha-D-ribose 1-diphosphate + uracil</text>
        <dbReference type="Rhea" id="RHEA:13017"/>
        <dbReference type="ChEBI" id="CHEBI:17568"/>
        <dbReference type="ChEBI" id="CHEBI:33019"/>
        <dbReference type="ChEBI" id="CHEBI:57865"/>
        <dbReference type="ChEBI" id="CHEBI:58017"/>
        <dbReference type="EC" id="2.4.2.9"/>
    </reaction>
</comment>
<comment type="cofactor">
    <cofactor evidence="1">
        <name>Mg(2+)</name>
        <dbReference type="ChEBI" id="CHEBI:18420"/>
    </cofactor>
    <text evidence="1">Binds 1 Mg(2+) ion per subunit. The magnesium is bound as Mg-PRPP.</text>
</comment>
<comment type="activity regulation">
    <text evidence="1">Allosterically activated by GTP.</text>
</comment>
<comment type="pathway">
    <text evidence="1">Pyrimidine metabolism; UMP biosynthesis via salvage pathway; UMP from uracil: step 1/1.</text>
</comment>
<comment type="similarity">
    <text evidence="1">Belongs to the UPRTase family.</text>
</comment>
<feature type="chain" id="PRO_1000164832" description="Uracil phosphoribosyltransferase">
    <location>
        <begin position="1"/>
        <end position="209"/>
    </location>
</feature>
<feature type="binding site" evidence="1">
    <location>
        <position position="79"/>
    </location>
    <ligand>
        <name>5-phospho-alpha-D-ribose 1-diphosphate</name>
        <dbReference type="ChEBI" id="CHEBI:58017"/>
    </ligand>
</feature>
<feature type="binding site" evidence="1">
    <location>
        <position position="104"/>
    </location>
    <ligand>
        <name>5-phospho-alpha-D-ribose 1-diphosphate</name>
        <dbReference type="ChEBI" id="CHEBI:58017"/>
    </ligand>
</feature>
<feature type="binding site" evidence="1">
    <location>
        <begin position="131"/>
        <end position="139"/>
    </location>
    <ligand>
        <name>5-phospho-alpha-D-ribose 1-diphosphate</name>
        <dbReference type="ChEBI" id="CHEBI:58017"/>
    </ligand>
</feature>
<feature type="binding site" evidence="1">
    <location>
        <position position="194"/>
    </location>
    <ligand>
        <name>uracil</name>
        <dbReference type="ChEBI" id="CHEBI:17568"/>
    </ligand>
</feature>
<feature type="binding site" evidence="1">
    <location>
        <begin position="199"/>
        <end position="201"/>
    </location>
    <ligand>
        <name>uracil</name>
        <dbReference type="ChEBI" id="CHEBI:17568"/>
    </ligand>
</feature>
<feature type="binding site" evidence="1">
    <location>
        <position position="200"/>
    </location>
    <ligand>
        <name>5-phospho-alpha-D-ribose 1-diphosphate</name>
        <dbReference type="ChEBI" id="CHEBI:58017"/>
    </ligand>
</feature>
<keyword id="KW-0021">Allosteric enzyme</keyword>
<keyword id="KW-0328">Glycosyltransferase</keyword>
<keyword id="KW-0342">GTP-binding</keyword>
<keyword id="KW-0460">Magnesium</keyword>
<keyword id="KW-0547">Nucleotide-binding</keyword>
<keyword id="KW-0808">Transferase</keyword>
<proteinExistence type="inferred from homology"/>